<evidence type="ECO:0000255" key="1">
    <source>
        <dbReference type="HAMAP-Rule" id="MF_01318"/>
    </source>
</evidence>
<evidence type="ECO:0000305" key="2"/>
<proteinExistence type="inferred from homology"/>
<dbReference type="EMBL" id="CP000725">
    <property type="protein sequence ID" value="ABV10157.1"/>
    <property type="molecule type" value="Genomic_DNA"/>
</dbReference>
<dbReference type="RefSeq" id="WP_012130534.1">
    <property type="nucleotide sequence ID" value="NC_009785.1"/>
</dbReference>
<dbReference type="SMR" id="A8AY74"/>
<dbReference type="STRING" id="467705.SGO_1455"/>
<dbReference type="GeneID" id="93787717"/>
<dbReference type="KEGG" id="sgo:SGO_1455"/>
<dbReference type="eggNOG" id="COG0081">
    <property type="taxonomic scope" value="Bacteria"/>
</dbReference>
<dbReference type="HOGENOM" id="CLU_062853_0_0_9"/>
<dbReference type="Proteomes" id="UP000001131">
    <property type="component" value="Chromosome"/>
</dbReference>
<dbReference type="GO" id="GO:0015934">
    <property type="term" value="C:large ribosomal subunit"/>
    <property type="evidence" value="ECO:0007669"/>
    <property type="project" value="InterPro"/>
</dbReference>
<dbReference type="GO" id="GO:0019843">
    <property type="term" value="F:rRNA binding"/>
    <property type="evidence" value="ECO:0007669"/>
    <property type="project" value="UniProtKB-UniRule"/>
</dbReference>
<dbReference type="GO" id="GO:0003735">
    <property type="term" value="F:structural constituent of ribosome"/>
    <property type="evidence" value="ECO:0007669"/>
    <property type="project" value="InterPro"/>
</dbReference>
<dbReference type="GO" id="GO:0000049">
    <property type="term" value="F:tRNA binding"/>
    <property type="evidence" value="ECO:0007669"/>
    <property type="project" value="UniProtKB-KW"/>
</dbReference>
<dbReference type="GO" id="GO:0006417">
    <property type="term" value="P:regulation of translation"/>
    <property type="evidence" value="ECO:0007669"/>
    <property type="project" value="UniProtKB-KW"/>
</dbReference>
<dbReference type="GO" id="GO:0006412">
    <property type="term" value="P:translation"/>
    <property type="evidence" value="ECO:0007669"/>
    <property type="project" value="UniProtKB-UniRule"/>
</dbReference>
<dbReference type="CDD" id="cd00403">
    <property type="entry name" value="Ribosomal_L1"/>
    <property type="match status" value="1"/>
</dbReference>
<dbReference type="FunFam" id="3.40.50.790:FF:000001">
    <property type="entry name" value="50S ribosomal protein L1"/>
    <property type="match status" value="1"/>
</dbReference>
<dbReference type="Gene3D" id="3.30.190.20">
    <property type="match status" value="1"/>
</dbReference>
<dbReference type="Gene3D" id="3.40.50.790">
    <property type="match status" value="1"/>
</dbReference>
<dbReference type="HAMAP" id="MF_01318_B">
    <property type="entry name" value="Ribosomal_uL1_B"/>
    <property type="match status" value="1"/>
</dbReference>
<dbReference type="InterPro" id="IPR005878">
    <property type="entry name" value="Ribosom_uL1_bac-type"/>
</dbReference>
<dbReference type="InterPro" id="IPR002143">
    <property type="entry name" value="Ribosomal_uL1"/>
</dbReference>
<dbReference type="InterPro" id="IPR023674">
    <property type="entry name" value="Ribosomal_uL1-like"/>
</dbReference>
<dbReference type="InterPro" id="IPR028364">
    <property type="entry name" value="Ribosomal_uL1/biogenesis"/>
</dbReference>
<dbReference type="InterPro" id="IPR016095">
    <property type="entry name" value="Ribosomal_uL1_3-a/b-sand"/>
</dbReference>
<dbReference type="InterPro" id="IPR023673">
    <property type="entry name" value="Ribosomal_uL1_CS"/>
</dbReference>
<dbReference type="NCBIfam" id="TIGR01169">
    <property type="entry name" value="rplA_bact"/>
    <property type="match status" value="1"/>
</dbReference>
<dbReference type="PANTHER" id="PTHR36427">
    <property type="entry name" value="54S RIBOSOMAL PROTEIN L1, MITOCHONDRIAL"/>
    <property type="match status" value="1"/>
</dbReference>
<dbReference type="PANTHER" id="PTHR36427:SF3">
    <property type="entry name" value="LARGE RIBOSOMAL SUBUNIT PROTEIN UL1M"/>
    <property type="match status" value="1"/>
</dbReference>
<dbReference type="Pfam" id="PF00687">
    <property type="entry name" value="Ribosomal_L1"/>
    <property type="match status" value="1"/>
</dbReference>
<dbReference type="PIRSF" id="PIRSF002155">
    <property type="entry name" value="Ribosomal_L1"/>
    <property type="match status" value="1"/>
</dbReference>
<dbReference type="SUPFAM" id="SSF56808">
    <property type="entry name" value="Ribosomal protein L1"/>
    <property type="match status" value="1"/>
</dbReference>
<dbReference type="PROSITE" id="PS01199">
    <property type="entry name" value="RIBOSOMAL_L1"/>
    <property type="match status" value="1"/>
</dbReference>
<feature type="chain" id="PRO_1000086313" description="Large ribosomal subunit protein uL1">
    <location>
        <begin position="1"/>
        <end position="229"/>
    </location>
</feature>
<organism>
    <name type="scientific">Streptococcus gordonii (strain Challis / ATCC 35105 / BCRC 15272 / CH1 / DL1 / V288)</name>
    <dbReference type="NCBI Taxonomy" id="467705"/>
    <lineage>
        <taxon>Bacteria</taxon>
        <taxon>Bacillati</taxon>
        <taxon>Bacillota</taxon>
        <taxon>Bacilli</taxon>
        <taxon>Lactobacillales</taxon>
        <taxon>Streptococcaceae</taxon>
        <taxon>Streptococcus</taxon>
    </lineage>
</organism>
<keyword id="KW-1185">Reference proteome</keyword>
<keyword id="KW-0678">Repressor</keyword>
<keyword id="KW-0687">Ribonucleoprotein</keyword>
<keyword id="KW-0689">Ribosomal protein</keyword>
<keyword id="KW-0694">RNA-binding</keyword>
<keyword id="KW-0699">rRNA-binding</keyword>
<keyword id="KW-0810">Translation regulation</keyword>
<keyword id="KW-0820">tRNA-binding</keyword>
<reference key="1">
    <citation type="journal article" date="2007" name="J. Bacteriol.">
        <title>Genome-wide transcriptional changes in Streptococcus gordonii in response to competence signaling peptide.</title>
        <authorList>
            <person name="Vickerman M.M."/>
            <person name="Iobst S."/>
            <person name="Jesionowski A.M."/>
            <person name="Gill S.R."/>
        </authorList>
    </citation>
    <scope>NUCLEOTIDE SEQUENCE [LARGE SCALE GENOMIC DNA]</scope>
    <source>
        <strain>Challis / ATCC 35105 / BCRC 15272 / CH1 / DL1 / V288</strain>
    </source>
</reference>
<accession>A8AY74</accession>
<protein>
    <recommendedName>
        <fullName evidence="1">Large ribosomal subunit protein uL1</fullName>
    </recommendedName>
    <alternativeName>
        <fullName evidence="2">50S ribosomal protein L1</fullName>
    </alternativeName>
</protein>
<gene>
    <name evidence="1" type="primary">rplA</name>
    <name type="ordered locus">SGO_1455</name>
</gene>
<comment type="function">
    <text evidence="1">Binds directly to 23S rRNA. The L1 stalk is quite mobile in the ribosome, and is involved in E site tRNA release.</text>
</comment>
<comment type="function">
    <text evidence="1">Protein L1 is also a translational repressor protein, it controls the translation of the L11 operon by binding to its mRNA.</text>
</comment>
<comment type="subunit">
    <text evidence="1">Part of the 50S ribosomal subunit.</text>
</comment>
<comment type="similarity">
    <text evidence="1">Belongs to the universal ribosomal protein uL1 family.</text>
</comment>
<sequence>MAKKSKQLRAALEKIDSTKAYSVEEAVALAKETNFAKFDATVEVAYNLNIDVKKADQQIRGAMVLPHGTGKTARVLVFARGAKAEEAKAAGADFVGEDDLVAKINDGWLDFDVVIATPDMMALVGRLGRVLGPRNLMPNPKTGTVTMDVAKAVEESKGGKITYRADRAGIVQAIIGKVSFDADKLAENFKAFNEVIQKAKPATAKGTYVTSLTITTTQGPGIKVDVNSL</sequence>
<name>RL1_STRGC</name>